<keyword id="KW-0227">DNA damage</keyword>
<keyword id="KW-0234">DNA repair</keyword>
<keyword id="KW-0255">Endonuclease</keyword>
<keyword id="KW-0378">Hydrolase</keyword>
<keyword id="KW-0479">Metal-binding</keyword>
<keyword id="KW-0540">Nuclease</keyword>
<keyword id="KW-0862">Zinc</keyword>
<dbReference type="EC" id="3.1.21.2" evidence="1"/>
<dbReference type="EMBL" id="CU928158">
    <property type="protein sequence ID" value="CAQ89746.1"/>
    <property type="molecule type" value="Genomic_DNA"/>
</dbReference>
<dbReference type="RefSeq" id="WP_000873874.1">
    <property type="nucleotide sequence ID" value="NC_011740.1"/>
</dbReference>
<dbReference type="SMR" id="B7LVB9"/>
<dbReference type="GeneID" id="75056723"/>
<dbReference type="KEGG" id="efe:EFER_2244"/>
<dbReference type="HOGENOM" id="CLU_025885_0_4_6"/>
<dbReference type="OrthoDB" id="9805666at2"/>
<dbReference type="Proteomes" id="UP000000745">
    <property type="component" value="Chromosome"/>
</dbReference>
<dbReference type="GO" id="GO:0008833">
    <property type="term" value="F:deoxyribonuclease IV (phage-T4-induced) activity"/>
    <property type="evidence" value="ECO:0007669"/>
    <property type="project" value="UniProtKB-UniRule"/>
</dbReference>
<dbReference type="GO" id="GO:0003677">
    <property type="term" value="F:DNA binding"/>
    <property type="evidence" value="ECO:0007669"/>
    <property type="project" value="InterPro"/>
</dbReference>
<dbReference type="GO" id="GO:0003906">
    <property type="term" value="F:DNA-(apurinic or apyrimidinic site) endonuclease activity"/>
    <property type="evidence" value="ECO:0007669"/>
    <property type="project" value="TreeGrafter"/>
</dbReference>
<dbReference type="GO" id="GO:0008081">
    <property type="term" value="F:phosphoric diester hydrolase activity"/>
    <property type="evidence" value="ECO:0007669"/>
    <property type="project" value="TreeGrafter"/>
</dbReference>
<dbReference type="GO" id="GO:0008270">
    <property type="term" value="F:zinc ion binding"/>
    <property type="evidence" value="ECO:0007669"/>
    <property type="project" value="UniProtKB-UniRule"/>
</dbReference>
<dbReference type="GO" id="GO:0006284">
    <property type="term" value="P:base-excision repair"/>
    <property type="evidence" value="ECO:0007669"/>
    <property type="project" value="TreeGrafter"/>
</dbReference>
<dbReference type="CDD" id="cd00019">
    <property type="entry name" value="AP2Ec"/>
    <property type="match status" value="1"/>
</dbReference>
<dbReference type="FunFam" id="3.20.20.150:FF:000001">
    <property type="entry name" value="Probable endonuclease 4"/>
    <property type="match status" value="1"/>
</dbReference>
<dbReference type="Gene3D" id="3.20.20.150">
    <property type="entry name" value="Divalent-metal-dependent TIM barrel enzymes"/>
    <property type="match status" value="1"/>
</dbReference>
<dbReference type="HAMAP" id="MF_00152">
    <property type="entry name" value="Nfo"/>
    <property type="match status" value="1"/>
</dbReference>
<dbReference type="InterPro" id="IPR001719">
    <property type="entry name" value="AP_endonuc_2"/>
</dbReference>
<dbReference type="InterPro" id="IPR018246">
    <property type="entry name" value="AP_endonuc_F2_Zn_BS"/>
</dbReference>
<dbReference type="InterPro" id="IPR036237">
    <property type="entry name" value="Xyl_isomerase-like_sf"/>
</dbReference>
<dbReference type="InterPro" id="IPR013022">
    <property type="entry name" value="Xyl_isomerase-like_TIM-brl"/>
</dbReference>
<dbReference type="NCBIfam" id="TIGR00587">
    <property type="entry name" value="nfo"/>
    <property type="match status" value="1"/>
</dbReference>
<dbReference type="NCBIfam" id="NF002199">
    <property type="entry name" value="PRK01060.1-4"/>
    <property type="match status" value="1"/>
</dbReference>
<dbReference type="PANTHER" id="PTHR21445:SF0">
    <property type="entry name" value="APURINIC-APYRIMIDINIC ENDONUCLEASE"/>
    <property type="match status" value="1"/>
</dbReference>
<dbReference type="PANTHER" id="PTHR21445">
    <property type="entry name" value="ENDONUCLEASE IV ENDODEOXYRIBONUCLEASE IV"/>
    <property type="match status" value="1"/>
</dbReference>
<dbReference type="Pfam" id="PF01261">
    <property type="entry name" value="AP_endonuc_2"/>
    <property type="match status" value="1"/>
</dbReference>
<dbReference type="SMART" id="SM00518">
    <property type="entry name" value="AP2Ec"/>
    <property type="match status" value="1"/>
</dbReference>
<dbReference type="SUPFAM" id="SSF51658">
    <property type="entry name" value="Xylose isomerase-like"/>
    <property type="match status" value="1"/>
</dbReference>
<dbReference type="PROSITE" id="PS00729">
    <property type="entry name" value="AP_NUCLEASE_F2_1"/>
    <property type="match status" value="1"/>
</dbReference>
<dbReference type="PROSITE" id="PS00730">
    <property type="entry name" value="AP_NUCLEASE_F2_2"/>
    <property type="match status" value="1"/>
</dbReference>
<dbReference type="PROSITE" id="PS00731">
    <property type="entry name" value="AP_NUCLEASE_F2_3"/>
    <property type="match status" value="1"/>
</dbReference>
<dbReference type="PROSITE" id="PS51432">
    <property type="entry name" value="AP_NUCLEASE_F2_4"/>
    <property type="match status" value="1"/>
</dbReference>
<reference key="1">
    <citation type="journal article" date="2009" name="PLoS Genet.">
        <title>Organised genome dynamics in the Escherichia coli species results in highly diverse adaptive paths.</title>
        <authorList>
            <person name="Touchon M."/>
            <person name="Hoede C."/>
            <person name="Tenaillon O."/>
            <person name="Barbe V."/>
            <person name="Baeriswyl S."/>
            <person name="Bidet P."/>
            <person name="Bingen E."/>
            <person name="Bonacorsi S."/>
            <person name="Bouchier C."/>
            <person name="Bouvet O."/>
            <person name="Calteau A."/>
            <person name="Chiapello H."/>
            <person name="Clermont O."/>
            <person name="Cruveiller S."/>
            <person name="Danchin A."/>
            <person name="Diard M."/>
            <person name="Dossat C."/>
            <person name="Karoui M.E."/>
            <person name="Frapy E."/>
            <person name="Garry L."/>
            <person name="Ghigo J.M."/>
            <person name="Gilles A.M."/>
            <person name="Johnson J."/>
            <person name="Le Bouguenec C."/>
            <person name="Lescat M."/>
            <person name="Mangenot S."/>
            <person name="Martinez-Jehanne V."/>
            <person name="Matic I."/>
            <person name="Nassif X."/>
            <person name="Oztas S."/>
            <person name="Petit M.A."/>
            <person name="Pichon C."/>
            <person name="Rouy Z."/>
            <person name="Ruf C.S."/>
            <person name="Schneider D."/>
            <person name="Tourret J."/>
            <person name="Vacherie B."/>
            <person name="Vallenet D."/>
            <person name="Medigue C."/>
            <person name="Rocha E.P.C."/>
            <person name="Denamur E."/>
        </authorList>
    </citation>
    <scope>NUCLEOTIDE SEQUENCE [LARGE SCALE GENOMIC DNA]</scope>
    <source>
        <strain>ATCC 35469 / DSM 13698 / BCRC 15582 / CCUG 18766 / IAM 14443 / JCM 21226 / LMG 7866 / NBRC 102419 / NCTC 12128 / CDC 0568-73</strain>
    </source>
</reference>
<feature type="chain" id="PRO_1000118098" description="Probable endonuclease 4">
    <location>
        <begin position="1"/>
        <end position="285"/>
    </location>
</feature>
<feature type="binding site" evidence="1">
    <location>
        <position position="69"/>
    </location>
    <ligand>
        <name>Zn(2+)</name>
        <dbReference type="ChEBI" id="CHEBI:29105"/>
        <label>1</label>
    </ligand>
</feature>
<feature type="binding site" evidence="1">
    <location>
        <position position="109"/>
    </location>
    <ligand>
        <name>Zn(2+)</name>
        <dbReference type="ChEBI" id="CHEBI:29105"/>
        <label>1</label>
    </ligand>
</feature>
<feature type="binding site" evidence="1">
    <location>
        <position position="145"/>
    </location>
    <ligand>
        <name>Zn(2+)</name>
        <dbReference type="ChEBI" id="CHEBI:29105"/>
        <label>1</label>
    </ligand>
</feature>
<feature type="binding site" evidence="1">
    <location>
        <position position="145"/>
    </location>
    <ligand>
        <name>Zn(2+)</name>
        <dbReference type="ChEBI" id="CHEBI:29105"/>
        <label>2</label>
    </ligand>
</feature>
<feature type="binding site" evidence="1">
    <location>
        <position position="179"/>
    </location>
    <ligand>
        <name>Zn(2+)</name>
        <dbReference type="ChEBI" id="CHEBI:29105"/>
        <label>2</label>
    </ligand>
</feature>
<feature type="binding site" evidence="1">
    <location>
        <position position="182"/>
    </location>
    <ligand>
        <name>Zn(2+)</name>
        <dbReference type="ChEBI" id="CHEBI:29105"/>
        <label>3</label>
    </ligand>
</feature>
<feature type="binding site" evidence="1">
    <location>
        <position position="216"/>
    </location>
    <ligand>
        <name>Zn(2+)</name>
        <dbReference type="ChEBI" id="CHEBI:29105"/>
        <label>2</label>
    </ligand>
</feature>
<feature type="binding site" evidence="1">
    <location>
        <position position="229"/>
    </location>
    <ligand>
        <name>Zn(2+)</name>
        <dbReference type="ChEBI" id="CHEBI:29105"/>
        <label>3</label>
    </ligand>
</feature>
<feature type="binding site" evidence="1">
    <location>
        <position position="231"/>
    </location>
    <ligand>
        <name>Zn(2+)</name>
        <dbReference type="ChEBI" id="CHEBI:29105"/>
        <label>3</label>
    </ligand>
</feature>
<feature type="binding site" evidence="1">
    <location>
        <position position="261"/>
    </location>
    <ligand>
        <name>Zn(2+)</name>
        <dbReference type="ChEBI" id="CHEBI:29105"/>
        <label>2</label>
    </ligand>
</feature>
<evidence type="ECO:0000255" key="1">
    <source>
        <dbReference type="HAMAP-Rule" id="MF_00152"/>
    </source>
</evidence>
<sequence>MKYIGAHVSAAGGLANAAIRAAEIDATAFALFTKNQRQWRAAPLTTQTIDEFKAACEKYHYTSAQILPHDSYLINLGHPVAEALEKSRDAFIDEMQRCEQLGLSLLNFHPGSHLMQISEEDCLARIAESINIALDKTEGVTAVIENTAGQGSNLGFKFEHLAAIIAGVEDKSRVGVCIDTCHAFAAGYDLRTPAECEKTFAEFERIVGFKYLRGMHLNDAKSTFGSRVDRHHSLGEGNIGHDAFRWIMQDARFDGIPLILETINPDIWAEEIAWLKAQQTEKAVA</sequence>
<proteinExistence type="inferred from homology"/>
<protein>
    <recommendedName>
        <fullName evidence="1">Probable endonuclease 4</fullName>
        <ecNumber evidence="1">3.1.21.2</ecNumber>
    </recommendedName>
    <alternativeName>
        <fullName evidence="1">Endodeoxyribonuclease IV</fullName>
    </alternativeName>
    <alternativeName>
        <fullName evidence="1">Endonuclease IV</fullName>
    </alternativeName>
</protein>
<name>END4_ESCF3</name>
<organism>
    <name type="scientific">Escherichia fergusonii (strain ATCC 35469 / DSM 13698 / CCUG 18766 / IAM 14443 / JCM 21226 / LMG 7866 / NBRC 102419 / NCTC 12128 / CDC 0568-73)</name>
    <dbReference type="NCBI Taxonomy" id="585054"/>
    <lineage>
        <taxon>Bacteria</taxon>
        <taxon>Pseudomonadati</taxon>
        <taxon>Pseudomonadota</taxon>
        <taxon>Gammaproteobacteria</taxon>
        <taxon>Enterobacterales</taxon>
        <taxon>Enterobacteriaceae</taxon>
        <taxon>Escherichia</taxon>
    </lineage>
</organism>
<accession>B7LVB9</accession>
<gene>
    <name evidence="1" type="primary">nfo</name>
    <name type="ordered locus">EFER_2244</name>
</gene>
<comment type="function">
    <text evidence="1">Endonuclease IV plays a role in DNA repair. It cleaves phosphodiester bonds at apurinic or apyrimidinic (AP) sites, generating a 3'-hydroxyl group and a 5'-terminal sugar phosphate.</text>
</comment>
<comment type="catalytic activity">
    <reaction evidence="1">
        <text>Endonucleolytic cleavage to 5'-phosphooligonucleotide end-products.</text>
        <dbReference type="EC" id="3.1.21.2"/>
    </reaction>
</comment>
<comment type="cofactor">
    <cofactor evidence="1">
        <name>Zn(2+)</name>
        <dbReference type="ChEBI" id="CHEBI:29105"/>
    </cofactor>
    <text evidence="1">Binds 3 Zn(2+) ions.</text>
</comment>
<comment type="similarity">
    <text evidence="1">Belongs to the AP endonuclease 2 family.</text>
</comment>